<gene>
    <name evidence="22" type="primary">MCM3</name>
</gene>
<evidence type="ECO:0000250" key="1">
    <source>
        <dbReference type="UniProtKB" id="P25206"/>
    </source>
</evidence>
<evidence type="ECO:0000250" key="2">
    <source>
        <dbReference type="UniProtKB" id="P49739"/>
    </source>
</evidence>
<evidence type="ECO:0000256" key="3">
    <source>
        <dbReference type="SAM" id="MobiDB-lite"/>
    </source>
</evidence>
<evidence type="ECO:0000269" key="4">
    <source>
    </source>
</evidence>
<evidence type="ECO:0000269" key="5">
    <source>
    </source>
</evidence>
<evidence type="ECO:0000269" key="6">
    <source>
    </source>
</evidence>
<evidence type="ECO:0000269" key="7">
    <source>
    </source>
</evidence>
<evidence type="ECO:0000269" key="8">
    <source>
    </source>
</evidence>
<evidence type="ECO:0000269" key="9">
    <source>
    </source>
</evidence>
<evidence type="ECO:0000269" key="10">
    <source>
    </source>
</evidence>
<evidence type="ECO:0000269" key="11">
    <source>
    </source>
</evidence>
<evidence type="ECO:0000269" key="12">
    <source>
    </source>
</evidence>
<evidence type="ECO:0000269" key="13">
    <source>
    </source>
</evidence>
<evidence type="ECO:0000269" key="14">
    <source>
    </source>
</evidence>
<evidence type="ECO:0000269" key="15">
    <source>
    </source>
</evidence>
<evidence type="ECO:0000269" key="16">
    <source ref="5"/>
</evidence>
<evidence type="ECO:0000269" key="17">
    <source ref="9"/>
</evidence>
<evidence type="ECO:0000303" key="18">
    <source>
    </source>
</evidence>
<evidence type="ECO:0000305" key="19"/>
<evidence type="ECO:0000305" key="20">
    <source>
    </source>
</evidence>
<evidence type="ECO:0000305" key="21">
    <source>
    </source>
</evidence>
<evidence type="ECO:0000312" key="22">
    <source>
        <dbReference type="HGNC" id="HGNC:6945"/>
    </source>
</evidence>
<evidence type="ECO:0007744" key="23">
    <source>
        <dbReference type="PDB" id="6XTX"/>
    </source>
</evidence>
<evidence type="ECO:0007744" key="24">
    <source>
        <dbReference type="PDB" id="6XTY"/>
    </source>
</evidence>
<evidence type="ECO:0007744" key="25">
    <source>
        <dbReference type="PDB" id="7PFO"/>
    </source>
</evidence>
<evidence type="ECO:0007744" key="26">
    <source>
        <dbReference type="PDB" id="7PLO"/>
    </source>
</evidence>
<evidence type="ECO:0007744" key="27">
    <source>
    </source>
</evidence>
<evidence type="ECO:0007744" key="28">
    <source>
    </source>
</evidence>
<evidence type="ECO:0007744" key="29">
    <source>
    </source>
</evidence>
<evidence type="ECO:0007744" key="30">
    <source>
    </source>
</evidence>
<evidence type="ECO:0007744" key="31">
    <source>
    </source>
</evidence>
<evidence type="ECO:0007744" key="32">
    <source>
    </source>
</evidence>
<evidence type="ECO:0007744" key="33">
    <source>
    </source>
</evidence>
<evidence type="ECO:0007744" key="34">
    <source>
    </source>
</evidence>
<evidence type="ECO:0007744" key="35">
    <source>
    </source>
</evidence>
<evidence type="ECO:0007744" key="36">
    <source>
    </source>
</evidence>
<evidence type="ECO:0007744" key="37">
    <source>
    </source>
</evidence>
<evidence type="ECO:0007744" key="38">
    <source>
    </source>
</evidence>
<evidence type="ECO:0007744" key="39">
    <source>
    </source>
</evidence>
<evidence type="ECO:0007829" key="40">
    <source>
        <dbReference type="PDB" id="8S09"/>
    </source>
</evidence>
<dbReference type="EC" id="3.6.4.12" evidence="11"/>
<dbReference type="EMBL" id="X62153">
    <property type="protein sequence ID" value="CAA44078.2"/>
    <property type="molecule type" value="mRNA"/>
</dbReference>
<dbReference type="EMBL" id="D38073">
    <property type="protein sequence ID" value="BAA07267.1"/>
    <property type="molecule type" value="mRNA"/>
</dbReference>
<dbReference type="EMBL" id="AK301704">
    <property type="protein sequence ID" value="BAG63176.1"/>
    <property type="molecule type" value="mRNA"/>
</dbReference>
<dbReference type="EMBL" id="AY621074">
    <property type="protein sequence ID" value="AAT27321.1"/>
    <property type="molecule type" value="Genomic_DNA"/>
</dbReference>
<dbReference type="EMBL" id="AL034343">
    <property type="status" value="NOT_ANNOTATED_CDS"/>
    <property type="molecule type" value="Genomic_DNA"/>
</dbReference>
<dbReference type="EMBL" id="CH471081">
    <property type="protein sequence ID" value="EAX04367.1"/>
    <property type="molecule type" value="Genomic_DNA"/>
</dbReference>
<dbReference type="EMBL" id="BC001626">
    <property type="protein sequence ID" value="AAH01626.1"/>
    <property type="molecule type" value="mRNA"/>
</dbReference>
<dbReference type="EMBL" id="BC003509">
    <property type="protein sequence ID" value="AAH03509.2"/>
    <property type="molecule type" value="mRNA"/>
</dbReference>
<dbReference type="CCDS" id="CCDS4940.3">
    <molecule id="P25205-1"/>
</dbReference>
<dbReference type="PIR" id="S62594">
    <property type="entry name" value="S62594"/>
</dbReference>
<dbReference type="RefSeq" id="NP_001257401.1">
    <property type="nucleotide sequence ID" value="NM_001270472.1"/>
</dbReference>
<dbReference type="RefSeq" id="NP_002379.3">
    <molecule id="P25205-1"/>
    <property type="nucleotide sequence ID" value="NM_002388.4"/>
</dbReference>
<dbReference type="PDB" id="6XTX">
    <property type="method" value="EM"/>
    <property type="resolution" value="3.29 A"/>
    <property type="chains" value="3=1-808"/>
</dbReference>
<dbReference type="PDB" id="6XTY">
    <property type="method" value="EM"/>
    <property type="resolution" value="6.77 A"/>
    <property type="chains" value="3=1-808"/>
</dbReference>
<dbReference type="PDB" id="7PFO">
    <property type="method" value="EM"/>
    <property type="resolution" value="3.20 A"/>
    <property type="chains" value="3=1-808"/>
</dbReference>
<dbReference type="PDB" id="7PLO">
    <property type="method" value="EM"/>
    <property type="resolution" value="2.80 A"/>
    <property type="chains" value="3=1-808"/>
</dbReference>
<dbReference type="PDB" id="7W1Y">
    <property type="method" value="EM"/>
    <property type="resolution" value="2.59 A"/>
    <property type="chains" value="3/B=1-808"/>
</dbReference>
<dbReference type="PDB" id="7W68">
    <property type="method" value="EM"/>
    <property type="resolution" value="4.40 A"/>
    <property type="chains" value="B=1-808"/>
</dbReference>
<dbReference type="PDB" id="8B9D">
    <property type="method" value="EM"/>
    <property type="resolution" value="3.40 A"/>
    <property type="chains" value="3=1-808"/>
</dbReference>
<dbReference type="PDB" id="8RWV">
    <property type="method" value="EM"/>
    <property type="resolution" value="6.68 A"/>
    <property type="chains" value="3=1-808"/>
</dbReference>
<dbReference type="PDB" id="8S09">
    <property type="method" value="EM"/>
    <property type="resolution" value="3.10 A"/>
    <property type="chains" value="3/B=1-808"/>
</dbReference>
<dbReference type="PDB" id="8S0A">
    <property type="method" value="EM"/>
    <property type="resolution" value="3.20 A"/>
    <property type="chains" value="3=1-808"/>
</dbReference>
<dbReference type="PDB" id="8S0B">
    <property type="method" value="EM"/>
    <property type="resolution" value="3.60 A"/>
    <property type="chains" value="3=1-808"/>
</dbReference>
<dbReference type="PDB" id="8S0D">
    <property type="method" value="EM"/>
    <property type="resolution" value="3.60 A"/>
    <property type="chains" value="3=1-808"/>
</dbReference>
<dbReference type="PDB" id="8S0E">
    <property type="method" value="EM"/>
    <property type="resolution" value="3.80 A"/>
    <property type="chains" value="3=1-808"/>
</dbReference>
<dbReference type="PDB" id="8S0F">
    <property type="method" value="EM"/>
    <property type="resolution" value="4.10 A"/>
    <property type="chains" value="3=1-808"/>
</dbReference>
<dbReference type="PDB" id="8W0E">
    <property type="method" value="EM"/>
    <property type="resolution" value="3.40 A"/>
    <property type="chains" value="3=2-808"/>
</dbReference>
<dbReference type="PDB" id="8W0F">
    <property type="method" value="EM"/>
    <property type="resolution" value="2.80 A"/>
    <property type="chains" value="3/B=2-808"/>
</dbReference>
<dbReference type="PDB" id="8W0G">
    <property type="method" value="EM"/>
    <property type="resolution" value="3.80 A"/>
    <property type="chains" value="3/B=2-808"/>
</dbReference>
<dbReference type="PDB" id="8W0I">
    <property type="method" value="EM"/>
    <property type="resolution" value="3.50 A"/>
    <property type="chains" value="3=2-808"/>
</dbReference>
<dbReference type="PDB" id="9CAQ">
    <property type="method" value="EM"/>
    <property type="resolution" value="3.20 A"/>
    <property type="chains" value="3/B=1-808"/>
</dbReference>
<dbReference type="PDBsum" id="6XTX"/>
<dbReference type="PDBsum" id="6XTY"/>
<dbReference type="PDBsum" id="7PFO"/>
<dbReference type="PDBsum" id="7PLO"/>
<dbReference type="PDBsum" id="7W1Y"/>
<dbReference type="PDBsum" id="7W68"/>
<dbReference type="PDBsum" id="8B9D"/>
<dbReference type="PDBsum" id="8RWV"/>
<dbReference type="PDBsum" id="8S09"/>
<dbReference type="PDBsum" id="8S0A"/>
<dbReference type="PDBsum" id="8S0B"/>
<dbReference type="PDBsum" id="8S0D"/>
<dbReference type="PDBsum" id="8S0E"/>
<dbReference type="PDBsum" id="8S0F"/>
<dbReference type="PDBsum" id="8W0E"/>
<dbReference type="PDBsum" id="8W0F"/>
<dbReference type="PDBsum" id="8W0G"/>
<dbReference type="PDBsum" id="8W0I"/>
<dbReference type="PDBsum" id="9CAQ"/>
<dbReference type="EMDB" id="EMD-10619"/>
<dbReference type="EMDB" id="EMD-10621"/>
<dbReference type="EMDB" id="EMD-13375"/>
<dbReference type="EMDB" id="EMD-13494"/>
<dbReference type="EMDB" id="EMD-19566"/>
<dbReference type="EMDB" id="EMD-19618"/>
<dbReference type="EMDB" id="EMD-19619"/>
<dbReference type="EMDB" id="EMD-19620"/>
<dbReference type="EMDB" id="EMD-19622"/>
<dbReference type="EMDB" id="EMD-19623"/>
<dbReference type="EMDB" id="EMD-19624"/>
<dbReference type="EMDB" id="EMD-32258"/>
<dbReference type="EMDB" id="EMD-32326"/>
<dbReference type="EMDB" id="EMD-43707"/>
<dbReference type="EMDB" id="EMD-43708"/>
<dbReference type="EMDB" id="EMD-43709"/>
<dbReference type="EMDB" id="EMD-43710"/>
<dbReference type="EMDB" id="EMD-45400"/>
<dbReference type="SMR" id="P25205"/>
<dbReference type="BioGRID" id="110340">
    <property type="interactions" value="366"/>
</dbReference>
<dbReference type="ComplexPortal" id="CPX-2940">
    <property type="entry name" value="MCM complex"/>
</dbReference>
<dbReference type="CORUM" id="P25205"/>
<dbReference type="DIP" id="DIP-31726N"/>
<dbReference type="FunCoup" id="P25205">
    <property type="interactions" value="2096"/>
</dbReference>
<dbReference type="IntAct" id="P25205">
    <property type="interactions" value="136"/>
</dbReference>
<dbReference type="MINT" id="P25205"/>
<dbReference type="STRING" id="9606.ENSP00000480987"/>
<dbReference type="ChEMBL" id="CHEMBL4630813"/>
<dbReference type="GlyCosmos" id="P25205">
    <property type="glycosylation" value="2 sites, 1 glycan"/>
</dbReference>
<dbReference type="GlyGen" id="P25205">
    <property type="glycosylation" value="2 sites, 1 O-linked glycan (2 sites)"/>
</dbReference>
<dbReference type="iPTMnet" id="P25205"/>
<dbReference type="MetOSite" id="P25205"/>
<dbReference type="PhosphoSitePlus" id="P25205"/>
<dbReference type="SwissPalm" id="P25205"/>
<dbReference type="BioMuta" id="MCM3"/>
<dbReference type="DMDM" id="19857543"/>
<dbReference type="jPOST" id="P25205"/>
<dbReference type="MassIVE" id="P25205"/>
<dbReference type="PaxDb" id="9606-ENSP00000480987"/>
<dbReference type="PeptideAtlas" id="P25205"/>
<dbReference type="ProteomicsDB" id="54265">
    <molecule id="P25205-1"/>
</dbReference>
<dbReference type="Pumba" id="P25205"/>
<dbReference type="Antibodypedia" id="1433">
    <property type="antibodies" value="544 antibodies from 40 providers"/>
</dbReference>
<dbReference type="DNASU" id="4172"/>
<dbReference type="Ensembl" id="ENST00000596288.7">
    <molecule id="P25205-1"/>
    <property type="protein sequence ID" value="ENSP00000472940.2"/>
    <property type="gene ID" value="ENSG00000112118.20"/>
</dbReference>
<dbReference type="Ensembl" id="ENST00000616552.4">
    <molecule id="P25205-2"/>
    <property type="protein sequence ID" value="ENSP00000480987.1"/>
    <property type="gene ID" value="ENSG00000112118.20"/>
</dbReference>
<dbReference type="GeneID" id="4172"/>
<dbReference type="KEGG" id="hsa:4172"/>
<dbReference type="MANE-Select" id="ENST00000596288.7">
    <property type="protein sequence ID" value="ENSP00000472940.2"/>
    <property type="RefSeq nucleotide sequence ID" value="NM_002388.6"/>
    <property type="RefSeq protein sequence ID" value="NP_002379.4"/>
</dbReference>
<dbReference type="UCSC" id="uc003pan.2">
    <molecule id="P25205-1"/>
    <property type="organism name" value="human"/>
</dbReference>
<dbReference type="AGR" id="HGNC:6945"/>
<dbReference type="CTD" id="4172"/>
<dbReference type="DisGeNET" id="4172"/>
<dbReference type="GeneCards" id="MCM3"/>
<dbReference type="HGNC" id="HGNC:6945">
    <property type="gene designation" value="MCM3"/>
</dbReference>
<dbReference type="HPA" id="ENSG00000112118">
    <property type="expression patterns" value="Low tissue specificity"/>
</dbReference>
<dbReference type="MalaCards" id="MCM3"/>
<dbReference type="MIM" id="602693">
    <property type="type" value="gene"/>
</dbReference>
<dbReference type="neXtProt" id="NX_P25205"/>
<dbReference type="OpenTargets" id="ENSG00000112118"/>
<dbReference type="PharmGKB" id="PA30691"/>
<dbReference type="VEuPathDB" id="HostDB:ENSG00000112118"/>
<dbReference type="eggNOG" id="KOG0479">
    <property type="taxonomic scope" value="Eukaryota"/>
</dbReference>
<dbReference type="GeneTree" id="ENSGT01050000244824"/>
<dbReference type="HOGENOM" id="CLU_000995_6_0_1"/>
<dbReference type="InParanoid" id="P25205"/>
<dbReference type="OrthoDB" id="1882346at2759"/>
<dbReference type="PAN-GO" id="P25205">
    <property type="GO annotations" value="7 GO annotations based on evolutionary models"/>
</dbReference>
<dbReference type="PhylomeDB" id="P25205"/>
<dbReference type="TreeFam" id="TF106459"/>
<dbReference type="PathwayCommons" id="P25205"/>
<dbReference type="Reactome" id="R-HSA-176187">
    <property type="pathway name" value="Activation of ATR in response to replication stress"/>
</dbReference>
<dbReference type="Reactome" id="R-HSA-176974">
    <property type="pathway name" value="Unwinding of DNA"/>
</dbReference>
<dbReference type="Reactome" id="R-HSA-68867">
    <property type="pathway name" value="Assembly of the pre-replicative complex"/>
</dbReference>
<dbReference type="Reactome" id="R-HSA-68949">
    <property type="pathway name" value="Orc1 removal from chromatin"/>
</dbReference>
<dbReference type="Reactome" id="R-HSA-68962">
    <property type="pathway name" value="Activation of the pre-replicative complex"/>
</dbReference>
<dbReference type="Reactome" id="R-HSA-69052">
    <property type="pathway name" value="Switching of origins to a post-replicative state"/>
</dbReference>
<dbReference type="SignaLink" id="P25205"/>
<dbReference type="SIGNOR" id="P25205"/>
<dbReference type="BioGRID-ORCS" id="4172">
    <property type="hits" value="750 hits in 1153 CRISPR screens"/>
</dbReference>
<dbReference type="CD-CODE" id="91857CE7">
    <property type="entry name" value="Nucleolus"/>
</dbReference>
<dbReference type="ChiTaRS" id="MCM3">
    <property type="organism name" value="human"/>
</dbReference>
<dbReference type="GeneWiki" id="MCM3"/>
<dbReference type="GenomeRNAi" id="4172"/>
<dbReference type="Pharos" id="P25205">
    <property type="development level" value="Tbio"/>
</dbReference>
<dbReference type="PRO" id="PR:P25205"/>
<dbReference type="Proteomes" id="UP000005640">
    <property type="component" value="Chromosome 6"/>
</dbReference>
<dbReference type="RNAct" id="P25205">
    <property type="molecule type" value="protein"/>
</dbReference>
<dbReference type="Bgee" id="ENSG00000112118">
    <property type="expression patterns" value="Expressed in ventricular zone and 204 other cell types or tissues"/>
</dbReference>
<dbReference type="ExpressionAtlas" id="P25205">
    <property type="expression patterns" value="baseline and differential"/>
</dbReference>
<dbReference type="GO" id="GO:0005658">
    <property type="term" value="C:alpha DNA polymerase:primase complex"/>
    <property type="evidence" value="ECO:0000304"/>
    <property type="project" value="ProtInc"/>
</dbReference>
<dbReference type="GO" id="GO:0000781">
    <property type="term" value="C:chromosome, telomeric region"/>
    <property type="evidence" value="ECO:0007005"/>
    <property type="project" value="BHF-UCL"/>
</dbReference>
<dbReference type="GO" id="GO:0071162">
    <property type="term" value="C:CMG complex"/>
    <property type="evidence" value="ECO:0000353"/>
    <property type="project" value="ComplexPortal"/>
</dbReference>
<dbReference type="GO" id="GO:0042555">
    <property type="term" value="C:MCM complex"/>
    <property type="evidence" value="ECO:0000314"/>
    <property type="project" value="UniProtKB"/>
</dbReference>
<dbReference type="GO" id="GO:0016020">
    <property type="term" value="C:membrane"/>
    <property type="evidence" value="ECO:0007005"/>
    <property type="project" value="UniProtKB"/>
</dbReference>
<dbReference type="GO" id="GO:0005654">
    <property type="term" value="C:nucleoplasm"/>
    <property type="evidence" value="ECO:0000304"/>
    <property type="project" value="Reactome"/>
</dbReference>
<dbReference type="GO" id="GO:0005634">
    <property type="term" value="C:nucleus"/>
    <property type="evidence" value="ECO:0000314"/>
    <property type="project" value="UniProtKB"/>
</dbReference>
<dbReference type="GO" id="GO:0048471">
    <property type="term" value="C:perinuclear region of cytoplasm"/>
    <property type="evidence" value="ECO:0000314"/>
    <property type="project" value="BHF-UCL"/>
</dbReference>
<dbReference type="GO" id="GO:0005524">
    <property type="term" value="F:ATP binding"/>
    <property type="evidence" value="ECO:0007669"/>
    <property type="project" value="UniProtKB-KW"/>
</dbReference>
<dbReference type="GO" id="GO:0016887">
    <property type="term" value="F:ATP hydrolysis activity"/>
    <property type="evidence" value="ECO:0007669"/>
    <property type="project" value="InterPro"/>
</dbReference>
<dbReference type="GO" id="GO:0003677">
    <property type="term" value="F:DNA binding"/>
    <property type="evidence" value="ECO:0000304"/>
    <property type="project" value="ProtInc"/>
</dbReference>
<dbReference type="GO" id="GO:0004386">
    <property type="term" value="F:helicase activity"/>
    <property type="evidence" value="ECO:0007669"/>
    <property type="project" value="UniProtKB-KW"/>
</dbReference>
<dbReference type="GO" id="GO:0003697">
    <property type="term" value="F:single-stranded DNA binding"/>
    <property type="evidence" value="ECO:0000318"/>
    <property type="project" value="GO_Central"/>
</dbReference>
<dbReference type="GO" id="GO:0006270">
    <property type="term" value="P:DNA replication initiation"/>
    <property type="evidence" value="ECO:0000304"/>
    <property type="project" value="ProtInc"/>
</dbReference>
<dbReference type="GO" id="GO:0006271">
    <property type="term" value="P:DNA strand elongation involved in DNA replication"/>
    <property type="evidence" value="ECO:0000318"/>
    <property type="project" value="GO_Central"/>
</dbReference>
<dbReference type="GO" id="GO:0000727">
    <property type="term" value="P:double-strand break repair via break-induced replication"/>
    <property type="evidence" value="ECO:0000318"/>
    <property type="project" value="GO_Central"/>
</dbReference>
<dbReference type="GO" id="GO:1902975">
    <property type="term" value="P:mitotic DNA replication initiation"/>
    <property type="evidence" value="ECO:0000318"/>
    <property type="project" value="GO_Central"/>
</dbReference>
<dbReference type="GO" id="GO:0030174">
    <property type="term" value="P:regulation of DNA-templated DNA replication initiation"/>
    <property type="evidence" value="ECO:0000303"/>
    <property type="project" value="ComplexPortal"/>
</dbReference>
<dbReference type="CDD" id="cd17754">
    <property type="entry name" value="MCM3"/>
    <property type="match status" value="1"/>
</dbReference>
<dbReference type="FunFam" id="2.20.28.10:FF:000006">
    <property type="entry name" value="DNA helicase"/>
    <property type="match status" value="1"/>
</dbReference>
<dbReference type="FunFam" id="3.30.1640.10:FF:000002">
    <property type="entry name" value="DNA helicase"/>
    <property type="match status" value="1"/>
</dbReference>
<dbReference type="FunFam" id="3.40.50.300:FF:000234">
    <property type="entry name" value="DNA helicase"/>
    <property type="match status" value="1"/>
</dbReference>
<dbReference type="Gene3D" id="2.20.28.10">
    <property type="match status" value="1"/>
</dbReference>
<dbReference type="Gene3D" id="3.30.1640.10">
    <property type="entry name" value="mini-chromosome maintenance (MCM) complex, chain A, domain 1"/>
    <property type="match status" value="1"/>
</dbReference>
<dbReference type="Gene3D" id="2.40.50.140">
    <property type="entry name" value="Nucleic acid-binding proteins"/>
    <property type="match status" value="1"/>
</dbReference>
<dbReference type="Gene3D" id="3.40.50.300">
    <property type="entry name" value="P-loop containing nucleotide triphosphate hydrolases"/>
    <property type="match status" value="1"/>
</dbReference>
<dbReference type="InterPro" id="IPR003593">
    <property type="entry name" value="AAA+_ATPase"/>
</dbReference>
<dbReference type="InterPro" id="IPR031327">
    <property type="entry name" value="MCM"/>
</dbReference>
<dbReference type="InterPro" id="IPR008046">
    <property type="entry name" value="Mcm3"/>
</dbReference>
<dbReference type="InterPro" id="IPR018525">
    <property type="entry name" value="MCM_CS"/>
</dbReference>
<dbReference type="InterPro" id="IPR001208">
    <property type="entry name" value="MCM_dom"/>
</dbReference>
<dbReference type="InterPro" id="IPR041562">
    <property type="entry name" value="MCM_lid"/>
</dbReference>
<dbReference type="InterPro" id="IPR027925">
    <property type="entry name" value="MCM_N"/>
</dbReference>
<dbReference type="InterPro" id="IPR033762">
    <property type="entry name" value="MCM_OB"/>
</dbReference>
<dbReference type="InterPro" id="IPR012340">
    <property type="entry name" value="NA-bd_OB-fold"/>
</dbReference>
<dbReference type="InterPro" id="IPR027417">
    <property type="entry name" value="P-loop_NTPase"/>
</dbReference>
<dbReference type="InterPro" id="IPR056575">
    <property type="entry name" value="WH_MCM3_C"/>
</dbReference>
<dbReference type="PANTHER" id="PTHR11630">
    <property type="entry name" value="DNA REPLICATION LICENSING FACTOR MCM FAMILY MEMBER"/>
    <property type="match status" value="1"/>
</dbReference>
<dbReference type="PANTHER" id="PTHR11630:SF106">
    <property type="entry name" value="DNA REPLICATION LICENSING FACTOR MCM3"/>
    <property type="match status" value="1"/>
</dbReference>
<dbReference type="Pfam" id="PF00493">
    <property type="entry name" value="MCM"/>
    <property type="match status" value="1"/>
</dbReference>
<dbReference type="Pfam" id="PF17855">
    <property type="entry name" value="MCM_lid"/>
    <property type="match status" value="1"/>
</dbReference>
<dbReference type="Pfam" id="PF14551">
    <property type="entry name" value="MCM_N"/>
    <property type="match status" value="1"/>
</dbReference>
<dbReference type="Pfam" id="PF17207">
    <property type="entry name" value="MCM_OB"/>
    <property type="match status" value="1"/>
</dbReference>
<dbReference type="Pfam" id="PF23191">
    <property type="entry name" value="WH_MCM3_C"/>
    <property type="match status" value="1"/>
</dbReference>
<dbReference type="PRINTS" id="PR01657">
    <property type="entry name" value="MCMFAMILY"/>
</dbReference>
<dbReference type="PRINTS" id="PR01659">
    <property type="entry name" value="MCMPROTEIN3"/>
</dbReference>
<dbReference type="SMART" id="SM00382">
    <property type="entry name" value="AAA"/>
    <property type="match status" value="1"/>
</dbReference>
<dbReference type="SMART" id="SM00350">
    <property type="entry name" value="MCM"/>
    <property type="match status" value="1"/>
</dbReference>
<dbReference type="SUPFAM" id="SSF50249">
    <property type="entry name" value="Nucleic acid-binding proteins"/>
    <property type="match status" value="1"/>
</dbReference>
<dbReference type="SUPFAM" id="SSF52540">
    <property type="entry name" value="P-loop containing nucleoside triphosphate hydrolases"/>
    <property type="match status" value="1"/>
</dbReference>
<dbReference type="PROSITE" id="PS00847">
    <property type="entry name" value="MCM_1"/>
    <property type="match status" value="1"/>
</dbReference>
<dbReference type="PROSITE" id="PS50051">
    <property type="entry name" value="MCM_2"/>
    <property type="match status" value="1"/>
</dbReference>
<proteinExistence type="evidence at protein level"/>
<reference key="1">
    <citation type="journal article" date="1993" name="Nucleic Acids Res.">
        <title>The P1 family: a new class of nuclear mammalian proteins related to the yeast Mcm replication proteins.</title>
        <authorList>
            <person name="Hu B."/>
            <person name="Burkhart R."/>
            <person name="Schulte D."/>
            <person name="Musahl C."/>
            <person name="Knippers R."/>
        </authorList>
    </citation>
    <scope>NUCLEOTIDE SEQUENCE [MRNA] (ISOFORM 1)</scope>
    <source>
        <tissue>Cervix</tissue>
    </source>
</reference>
<reference key="2">
    <citation type="submission" date="1999-08" db="EMBL/GenBank/DDBJ databases">
        <authorList>
            <person name="Goehring F."/>
            <person name="Jehnichen P."/>
            <person name="Hemmer W.H."/>
        </authorList>
    </citation>
    <scope>SEQUENCE REVISION</scope>
</reference>
<reference key="3">
    <citation type="journal article" date="1995" name="Cell">
        <title>Identification of the yeast MCM3-related protein as a component of Xenopus DNA replication licensing factor.</title>
        <authorList>
            <person name="Kubota Y."/>
            <person name="Mimura S."/>
            <person name="Nishimoto S."/>
            <person name="Takisawa H."/>
            <person name="Nojima H."/>
        </authorList>
    </citation>
    <scope>NUCLEOTIDE SEQUENCE [MRNA] (ISOFORM 1)</scope>
    <source>
        <tissue>Cervix</tissue>
    </source>
</reference>
<reference key="4">
    <citation type="journal article" date="2004" name="Nat. Genet.">
        <title>Complete sequencing and characterization of 21,243 full-length human cDNAs.</title>
        <authorList>
            <person name="Ota T."/>
            <person name="Suzuki Y."/>
            <person name="Nishikawa T."/>
            <person name="Otsuki T."/>
            <person name="Sugiyama T."/>
            <person name="Irie R."/>
            <person name="Wakamatsu A."/>
            <person name="Hayashi K."/>
            <person name="Sato H."/>
            <person name="Nagai K."/>
            <person name="Kimura K."/>
            <person name="Makita H."/>
            <person name="Sekine M."/>
            <person name="Obayashi M."/>
            <person name="Nishi T."/>
            <person name="Shibahara T."/>
            <person name="Tanaka T."/>
            <person name="Ishii S."/>
            <person name="Yamamoto J."/>
            <person name="Saito K."/>
            <person name="Kawai Y."/>
            <person name="Isono Y."/>
            <person name="Nakamura Y."/>
            <person name="Nagahari K."/>
            <person name="Murakami K."/>
            <person name="Yasuda T."/>
            <person name="Iwayanagi T."/>
            <person name="Wagatsuma M."/>
            <person name="Shiratori A."/>
            <person name="Sudo H."/>
            <person name="Hosoiri T."/>
            <person name="Kaku Y."/>
            <person name="Kodaira H."/>
            <person name="Kondo H."/>
            <person name="Sugawara M."/>
            <person name="Takahashi M."/>
            <person name="Kanda K."/>
            <person name="Yokoi T."/>
            <person name="Furuya T."/>
            <person name="Kikkawa E."/>
            <person name="Omura Y."/>
            <person name="Abe K."/>
            <person name="Kamihara K."/>
            <person name="Katsuta N."/>
            <person name="Sato K."/>
            <person name="Tanikawa M."/>
            <person name="Yamazaki M."/>
            <person name="Ninomiya K."/>
            <person name="Ishibashi T."/>
            <person name="Yamashita H."/>
            <person name="Murakawa K."/>
            <person name="Fujimori K."/>
            <person name="Tanai H."/>
            <person name="Kimata M."/>
            <person name="Watanabe M."/>
            <person name="Hiraoka S."/>
            <person name="Chiba Y."/>
            <person name="Ishida S."/>
            <person name="Ono Y."/>
            <person name="Takiguchi S."/>
            <person name="Watanabe S."/>
            <person name="Yosida M."/>
            <person name="Hotuta T."/>
            <person name="Kusano J."/>
            <person name="Kanehori K."/>
            <person name="Takahashi-Fujii A."/>
            <person name="Hara H."/>
            <person name="Tanase T.-O."/>
            <person name="Nomura Y."/>
            <person name="Togiya S."/>
            <person name="Komai F."/>
            <person name="Hara R."/>
            <person name="Takeuchi K."/>
            <person name="Arita M."/>
            <person name="Imose N."/>
            <person name="Musashino K."/>
            <person name="Yuuki H."/>
            <person name="Oshima A."/>
            <person name="Sasaki N."/>
            <person name="Aotsuka S."/>
            <person name="Yoshikawa Y."/>
            <person name="Matsunawa H."/>
            <person name="Ichihara T."/>
            <person name="Shiohata N."/>
            <person name="Sano S."/>
            <person name="Moriya S."/>
            <person name="Momiyama H."/>
            <person name="Satoh N."/>
            <person name="Takami S."/>
            <person name="Terashima Y."/>
            <person name="Suzuki O."/>
            <person name="Nakagawa S."/>
            <person name="Senoh A."/>
            <person name="Mizoguchi H."/>
            <person name="Goto Y."/>
            <person name="Shimizu F."/>
            <person name="Wakebe H."/>
            <person name="Hishigaki H."/>
            <person name="Watanabe T."/>
            <person name="Sugiyama A."/>
            <person name="Takemoto M."/>
            <person name="Kawakami B."/>
            <person name="Yamazaki M."/>
            <person name="Watanabe K."/>
            <person name="Kumagai A."/>
            <person name="Itakura S."/>
            <person name="Fukuzumi Y."/>
            <person name="Fujimori Y."/>
            <person name="Komiyama M."/>
            <person name="Tashiro H."/>
            <person name="Tanigami A."/>
            <person name="Fujiwara T."/>
            <person name="Ono T."/>
            <person name="Yamada K."/>
            <person name="Fujii Y."/>
            <person name="Ozaki K."/>
            <person name="Hirao M."/>
            <person name="Ohmori Y."/>
            <person name="Kawabata A."/>
            <person name="Hikiji T."/>
            <person name="Kobatake N."/>
            <person name="Inagaki H."/>
            <person name="Ikema Y."/>
            <person name="Okamoto S."/>
            <person name="Okitani R."/>
            <person name="Kawakami T."/>
            <person name="Noguchi S."/>
            <person name="Itoh T."/>
            <person name="Shigeta K."/>
            <person name="Senba T."/>
            <person name="Matsumura K."/>
            <person name="Nakajima Y."/>
            <person name="Mizuno T."/>
            <person name="Morinaga M."/>
            <person name="Sasaki M."/>
            <person name="Togashi T."/>
            <person name="Oyama M."/>
            <person name="Hata H."/>
            <person name="Watanabe M."/>
            <person name="Komatsu T."/>
            <person name="Mizushima-Sugano J."/>
            <person name="Satoh T."/>
            <person name="Shirai Y."/>
            <person name="Takahashi Y."/>
            <person name="Nakagawa K."/>
            <person name="Okumura K."/>
            <person name="Nagase T."/>
            <person name="Nomura N."/>
            <person name="Kikuchi H."/>
            <person name="Masuho Y."/>
            <person name="Yamashita R."/>
            <person name="Nakai K."/>
            <person name="Yada T."/>
            <person name="Nakamura Y."/>
            <person name="Ohara O."/>
            <person name="Isogai T."/>
            <person name="Sugano S."/>
        </authorList>
    </citation>
    <scope>NUCLEOTIDE SEQUENCE [LARGE SCALE MRNA] (ISOFORM 2)</scope>
    <source>
        <tissue>Testis</tissue>
    </source>
</reference>
<reference key="5">
    <citation type="submission" date="2004-05" db="EMBL/GenBank/DDBJ databases">
        <authorList>
            <consortium name="NIEHS SNPs program"/>
        </authorList>
    </citation>
    <scope>NUCLEOTIDE SEQUENCE [GENOMIC DNA]</scope>
    <scope>VARIANTS VAL-280; LEU-287; LEU-590; TRP-774 AND LYS-777</scope>
</reference>
<reference key="6">
    <citation type="journal article" date="2003" name="Nature">
        <title>The DNA sequence and analysis of human chromosome 6.</title>
        <authorList>
            <person name="Mungall A.J."/>
            <person name="Palmer S.A."/>
            <person name="Sims S.K."/>
            <person name="Edwards C.A."/>
            <person name="Ashurst J.L."/>
            <person name="Wilming L."/>
            <person name="Jones M.C."/>
            <person name="Horton R."/>
            <person name="Hunt S.E."/>
            <person name="Scott C.E."/>
            <person name="Gilbert J.G.R."/>
            <person name="Clamp M.E."/>
            <person name="Bethel G."/>
            <person name="Milne S."/>
            <person name="Ainscough R."/>
            <person name="Almeida J.P."/>
            <person name="Ambrose K.D."/>
            <person name="Andrews T.D."/>
            <person name="Ashwell R.I.S."/>
            <person name="Babbage A.K."/>
            <person name="Bagguley C.L."/>
            <person name="Bailey J."/>
            <person name="Banerjee R."/>
            <person name="Barker D.J."/>
            <person name="Barlow K.F."/>
            <person name="Bates K."/>
            <person name="Beare D.M."/>
            <person name="Beasley H."/>
            <person name="Beasley O."/>
            <person name="Bird C.P."/>
            <person name="Blakey S.E."/>
            <person name="Bray-Allen S."/>
            <person name="Brook J."/>
            <person name="Brown A.J."/>
            <person name="Brown J.Y."/>
            <person name="Burford D.C."/>
            <person name="Burrill W."/>
            <person name="Burton J."/>
            <person name="Carder C."/>
            <person name="Carter N.P."/>
            <person name="Chapman J.C."/>
            <person name="Clark S.Y."/>
            <person name="Clark G."/>
            <person name="Clee C.M."/>
            <person name="Clegg S."/>
            <person name="Cobley V."/>
            <person name="Collier R.E."/>
            <person name="Collins J.E."/>
            <person name="Colman L.K."/>
            <person name="Corby N.R."/>
            <person name="Coville G.J."/>
            <person name="Culley K.M."/>
            <person name="Dhami P."/>
            <person name="Davies J."/>
            <person name="Dunn M."/>
            <person name="Earthrowl M.E."/>
            <person name="Ellington A.E."/>
            <person name="Evans K.A."/>
            <person name="Faulkner L."/>
            <person name="Francis M.D."/>
            <person name="Frankish A."/>
            <person name="Frankland J."/>
            <person name="French L."/>
            <person name="Garner P."/>
            <person name="Garnett J."/>
            <person name="Ghori M.J."/>
            <person name="Gilby L.M."/>
            <person name="Gillson C.J."/>
            <person name="Glithero R.J."/>
            <person name="Grafham D.V."/>
            <person name="Grant M."/>
            <person name="Gribble S."/>
            <person name="Griffiths C."/>
            <person name="Griffiths M.N.D."/>
            <person name="Hall R."/>
            <person name="Halls K.S."/>
            <person name="Hammond S."/>
            <person name="Harley J.L."/>
            <person name="Hart E.A."/>
            <person name="Heath P.D."/>
            <person name="Heathcott R."/>
            <person name="Holmes S.J."/>
            <person name="Howden P.J."/>
            <person name="Howe K.L."/>
            <person name="Howell G.R."/>
            <person name="Huckle E."/>
            <person name="Humphray S.J."/>
            <person name="Humphries M.D."/>
            <person name="Hunt A.R."/>
            <person name="Johnson C.M."/>
            <person name="Joy A.A."/>
            <person name="Kay M."/>
            <person name="Keenan S.J."/>
            <person name="Kimberley A.M."/>
            <person name="King A."/>
            <person name="Laird G.K."/>
            <person name="Langford C."/>
            <person name="Lawlor S."/>
            <person name="Leongamornlert D.A."/>
            <person name="Leversha M."/>
            <person name="Lloyd C.R."/>
            <person name="Lloyd D.M."/>
            <person name="Loveland J.E."/>
            <person name="Lovell J."/>
            <person name="Martin S."/>
            <person name="Mashreghi-Mohammadi M."/>
            <person name="Maslen G.L."/>
            <person name="Matthews L."/>
            <person name="McCann O.T."/>
            <person name="McLaren S.J."/>
            <person name="McLay K."/>
            <person name="McMurray A."/>
            <person name="Moore M.J.F."/>
            <person name="Mullikin J.C."/>
            <person name="Niblett D."/>
            <person name="Nickerson T."/>
            <person name="Novik K.L."/>
            <person name="Oliver K."/>
            <person name="Overton-Larty E.K."/>
            <person name="Parker A."/>
            <person name="Patel R."/>
            <person name="Pearce A.V."/>
            <person name="Peck A.I."/>
            <person name="Phillimore B.J.C.T."/>
            <person name="Phillips S."/>
            <person name="Plumb R.W."/>
            <person name="Porter K.M."/>
            <person name="Ramsey Y."/>
            <person name="Ranby S.A."/>
            <person name="Rice C.M."/>
            <person name="Ross M.T."/>
            <person name="Searle S.M."/>
            <person name="Sehra H.K."/>
            <person name="Sheridan E."/>
            <person name="Skuce C.D."/>
            <person name="Smith S."/>
            <person name="Smith M."/>
            <person name="Spraggon L."/>
            <person name="Squares S.L."/>
            <person name="Steward C.A."/>
            <person name="Sycamore N."/>
            <person name="Tamlyn-Hall G."/>
            <person name="Tester J."/>
            <person name="Theaker A.J."/>
            <person name="Thomas D.W."/>
            <person name="Thorpe A."/>
            <person name="Tracey A."/>
            <person name="Tromans A."/>
            <person name="Tubby B."/>
            <person name="Wall M."/>
            <person name="Wallis J.M."/>
            <person name="West A.P."/>
            <person name="White S.S."/>
            <person name="Whitehead S.L."/>
            <person name="Whittaker H."/>
            <person name="Wild A."/>
            <person name="Willey D.J."/>
            <person name="Wilmer T.E."/>
            <person name="Wood J.M."/>
            <person name="Wray P.W."/>
            <person name="Wyatt J.C."/>
            <person name="Young L."/>
            <person name="Younger R.M."/>
            <person name="Bentley D.R."/>
            <person name="Coulson A."/>
            <person name="Durbin R.M."/>
            <person name="Hubbard T."/>
            <person name="Sulston J.E."/>
            <person name="Dunham I."/>
            <person name="Rogers J."/>
            <person name="Beck S."/>
        </authorList>
    </citation>
    <scope>NUCLEOTIDE SEQUENCE [LARGE SCALE GENOMIC DNA]</scope>
</reference>
<reference key="7">
    <citation type="submission" date="2005-07" db="EMBL/GenBank/DDBJ databases">
        <authorList>
            <person name="Mural R.J."/>
            <person name="Istrail S."/>
            <person name="Sutton G."/>
            <person name="Florea L."/>
            <person name="Halpern A.L."/>
            <person name="Mobarry C.M."/>
            <person name="Lippert R."/>
            <person name="Walenz B."/>
            <person name="Shatkay H."/>
            <person name="Dew I."/>
            <person name="Miller J.R."/>
            <person name="Flanigan M.J."/>
            <person name="Edwards N.J."/>
            <person name="Bolanos R."/>
            <person name="Fasulo D."/>
            <person name="Halldorsson B.V."/>
            <person name="Hannenhalli S."/>
            <person name="Turner R."/>
            <person name="Yooseph S."/>
            <person name="Lu F."/>
            <person name="Nusskern D.R."/>
            <person name="Shue B.C."/>
            <person name="Zheng X.H."/>
            <person name="Zhong F."/>
            <person name="Delcher A.L."/>
            <person name="Huson D.H."/>
            <person name="Kravitz S.A."/>
            <person name="Mouchard L."/>
            <person name="Reinert K."/>
            <person name="Remington K.A."/>
            <person name="Clark A.G."/>
            <person name="Waterman M.S."/>
            <person name="Eichler E.E."/>
            <person name="Adams M.D."/>
            <person name="Hunkapiller M.W."/>
            <person name="Myers E.W."/>
            <person name="Venter J.C."/>
        </authorList>
    </citation>
    <scope>NUCLEOTIDE SEQUENCE [LARGE SCALE GENOMIC DNA]</scope>
</reference>
<reference key="8">
    <citation type="journal article" date="2004" name="Genome Res.">
        <title>The status, quality, and expansion of the NIH full-length cDNA project: the Mammalian Gene Collection (MGC).</title>
        <authorList>
            <consortium name="The MGC Project Team"/>
        </authorList>
    </citation>
    <scope>NUCLEOTIDE SEQUENCE [LARGE SCALE MRNA] (ISOFORM 1)</scope>
    <source>
        <tissue>Lymph</tissue>
        <tissue>Pancreas</tissue>
    </source>
</reference>
<reference key="9">
    <citation type="submission" date="2007-07" db="UniProtKB">
        <authorList>
            <person name="Bienvenut W.V."/>
            <person name="Glen H."/>
            <person name="Brunton V.G."/>
            <person name="Frame M.C."/>
        </authorList>
    </citation>
    <scope>PROTEIN SEQUENCE OF 2-13; 47-55; 337-351 AND 749-756</scope>
    <scope>CLEAVAGE OF INITIATOR METHIONINE</scope>
    <scope>ACETYLATION AT ALA-2</scope>
    <scope>IDENTIFICATION BY MASS SPECTROMETRY</scope>
    <source>
        <tissue>Osteosarcoma</tissue>
    </source>
</reference>
<reference key="10">
    <citation type="journal article" date="1992" name="Nucleic Acids Res.">
        <title>Properties of the nuclear P1 protein, a mammalian homologue of the yeast Mcm3 replication protein.</title>
        <authorList>
            <person name="Thoemmes P."/>
            <person name="Fett R."/>
            <person name="Schray B."/>
            <person name="Burkhart R."/>
            <person name="Barnes M."/>
            <person name="Kennedy C."/>
            <person name="Brown N.C."/>
            <person name="Knippers R."/>
        </authorList>
    </citation>
    <scope>NUCLEOTIDE SEQUENCE [MRNA] OF 563-808 (ISOFORM 1)</scope>
</reference>
<reference key="11">
    <citation type="journal article" date="1998" name="J. Biol. Chem.">
        <title>Identification of a novel MCM3-associated protein that facilitates MCM3 nuclear localization.</title>
        <authorList>
            <person name="Takei Y."/>
            <person name="Tsujimoto G."/>
        </authorList>
    </citation>
    <scope>INTERACTION WITH MCM3AP</scope>
</reference>
<reference key="12">
    <citation type="journal article" date="2001" name="EMBO Rep.">
        <title>MCM3AP, a novel acetyltransferase that acetylates replication protein MCM3.</title>
        <authorList>
            <person name="Takei Y."/>
            <person name="Swietlik M."/>
            <person name="Tanoue A."/>
            <person name="Tsujimoto G."/>
            <person name="Kouzarides T."/>
            <person name="Laskey R."/>
        </authorList>
    </citation>
    <scope>INTERACTION WITH MCM3AP</scope>
    <scope>ACETYLATION</scope>
</reference>
<reference key="13">
    <citation type="journal article" date="2002" name="J. Biol. Chem.">
        <title>The MCM3 acetylase MCM3AP inhibits initiation, but not elongation, of DNA replication via interaction with MCM3.</title>
        <authorList>
            <person name="Takei Y."/>
            <person name="Assenberg M."/>
            <person name="Tsujimoto G."/>
            <person name="Laskey R."/>
        </authorList>
    </citation>
    <scope>INTERACTION WITH MCM3AP</scope>
    <scope>ACETYLATION</scope>
</reference>
<reference key="14">
    <citation type="journal article" date="2004" name="Proc. Natl. Acad. Sci. U.S.A.">
        <title>Minichromosome maintenance proteins are direct targets of the ATM and ATR checkpoint kinases.</title>
        <authorList>
            <person name="Cortez D."/>
            <person name="Glick G."/>
            <person name="Elledge S.J."/>
        </authorList>
    </citation>
    <scope>PHOSPHORYLATION AT SER-535</scope>
    <scope>MUTAGENESIS OF SER-535</scope>
</reference>
<reference key="15">
    <citation type="journal article" date="2006" name="Cell">
        <title>Global, in vivo, and site-specific phosphorylation dynamics in signaling networks.</title>
        <authorList>
            <person name="Olsen J.V."/>
            <person name="Blagoev B."/>
            <person name="Gnad F."/>
            <person name="Macek B."/>
            <person name="Kumar C."/>
            <person name="Mortensen P."/>
            <person name="Mann M."/>
        </authorList>
    </citation>
    <scope>PHOSPHORYLATION [LARGE SCALE ANALYSIS] AT THR-722</scope>
    <scope>IDENTIFICATION BY MASS SPECTROMETRY [LARGE SCALE ANALYSIS]</scope>
    <source>
        <tissue>Cervix carcinoma</tissue>
    </source>
</reference>
<reference key="16">
    <citation type="journal article" date="2006" name="Mol. Biol. Cell">
        <title>Essential role of phosphorylation of MCM2 by Cdc7/Dbf4 in the initiation of DNA replication in mammalian cells.</title>
        <authorList>
            <person name="Tsuji T."/>
            <person name="Ficarro S.B."/>
            <person name="Jiang W."/>
        </authorList>
    </citation>
    <scope>IDENTIFICATION IN THE MCM2-7 COMPLEX</scope>
    <scope>ATPASE ACTIVITY OF THE MCM2-7 COMPLEX</scope>
</reference>
<reference key="17">
    <citation type="journal article" date="2006" name="Nat. Biotechnol.">
        <title>A probability-based approach for high-throughput protein phosphorylation analysis and site localization.</title>
        <authorList>
            <person name="Beausoleil S.A."/>
            <person name="Villen J."/>
            <person name="Gerber S.A."/>
            <person name="Rush J."/>
            <person name="Gygi S.P."/>
        </authorList>
    </citation>
    <scope>PHOSPHORYLATION [LARGE SCALE ANALYSIS] AT SER-672 AND THR-674</scope>
    <scope>IDENTIFICATION BY MASS SPECTROMETRY [LARGE SCALE ANALYSIS]</scope>
    <source>
        <tissue>Cervix carcinoma</tissue>
    </source>
</reference>
<reference key="18">
    <citation type="journal article" date="2007" name="Electrophoresis">
        <title>Toward a global characterization of the phosphoproteome in prostate cancer cells: identification of phosphoproteins in the LNCaP cell line.</title>
        <authorList>
            <person name="Giorgianni F."/>
            <person name="Zhao Y."/>
            <person name="Desiderio D.M."/>
            <person name="Beranova-Giorgianni S."/>
        </authorList>
    </citation>
    <scope>PHOSPHORYLATION [LARGE SCALE ANALYSIS] AT THR-722</scope>
    <scope>IDENTIFICATION BY MASS SPECTROMETRY [LARGE SCALE ANALYSIS]</scope>
    <source>
        <tissue>Prostate cancer</tissue>
    </source>
</reference>
<reference key="19">
    <citation type="journal article" date="2007" name="Mol. Cell. Biol.">
        <title>Identification and characterization of a novel component of the human minichromosome maintenance complex.</title>
        <authorList>
            <person name="Sakwe A.M."/>
            <person name="Nguyen T."/>
            <person name="Athanasopoulos V."/>
            <person name="Shire K."/>
            <person name="Frappier L."/>
        </authorList>
    </citation>
    <scope>IDENTIFICATION IN THE MCM2-7 COMPLEX</scope>
    <scope>INTERACTION WITH MCMBP</scope>
    <scope>IDENTIFICATION BY MASS SPECTROMETRY</scope>
</reference>
<reference key="20">
    <citation type="journal article" date="2008" name="Mol. Cell">
        <title>Kinase-selective enrichment enables quantitative phosphoproteomics of the kinome across the cell cycle.</title>
        <authorList>
            <person name="Daub H."/>
            <person name="Olsen J.V."/>
            <person name="Bairlein M."/>
            <person name="Gnad F."/>
            <person name="Oppermann F.S."/>
            <person name="Korner R."/>
            <person name="Greff Z."/>
            <person name="Keri G."/>
            <person name="Stemmann O."/>
            <person name="Mann M."/>
        </authorList>
    </citation>
    <scope>PHOSPHORYLATION [LARGE SCALE ANALYSIS] AT THR-722</scope>
    <scope>IDENTIFICATION BY MASS SPECTROMETRY [LARGE SCALE ANALYSIS]</scope>
    <source>
        <tissue>Cervix carcinoma</tissue>
    </source>
</reference>
<reference key="21">
    <citation type="journal article" date="2008" name="Proc. Natl. Acad. Sci. U.S.A.">
        <title>A quantitative atlas of mitotic phosphorylation.</title>
        <authorList>
            <person name="Dephoure N."/>
            <person name="Zhou C."/>
            <person name="Villen J."/>
            <person name="Beausoleil S.A."/>
            <person name="Bakalarski C.E."/>
            <person name="Elledge S.J."/>
            <person name="Gygi S.P."/>
        </authorList>
    </citation>
    <scope>PHOSPHORYLATION [LARGE SCALE ANALYSIS] AT SER-160; SER-668; SER-672; THR-674; SER-681; SER-711; THR-713 AND THR-722</scope>
    <scope>IDENTIFICATION BY MASS SPECTROMETRY [LARGE SCALE ANALYSIS]</scope>
    <source>
        <tissue>Cervix carcinoma</tissue>
    </source>
</reference>
<reference key="22">
    <citation type="journal article" date="2009" name="Anal. Chem.">
        <title>Lys-N and trypsin cover complementary parts of the phosphoproteome in a refined SCX-based approach.</title>
        <authorList>
            <person name="Gauci S."/>
            <person name="Helbig A.O."/>
            <person name="Slijper M."/>
            <person name="Krijgsveld J."/>
            <person name="Heck A.J."/>
            <person name="Mohammed S."/>
        </authorList>
    </citation>
    <scope>ACETYLATION [LARGE SCALE ANALYSIS] AT ALA-2</scope>
    <scope>CLEAVAGE OF INITIATOR METHIONINE [LARGE SCALE ANALYSIS]</scope>
    <scope>IDENTIFICATION BY MASS SPECTROMETRY [LARGE SCALE ANALYSIS]</scope>
</reference>
<reference key="23">
    <citation type="journal article" date="2009" name="Mol. Cell. Proteomics">
        <title>Large-scale proteomics analysis of the human kinome.</title>
        <authorList>
            <person name="Oppermann F.S."/>
            <person name="Gnad F."/>
            <person name="Olsen J.V."/>
            <person name="Hornberger R."/>
            <person name="Greff Z."/>
            <person name="Keri G."/>
            <person name="Mann M."/>
            <person name="Daub H."/>
        </authorList>
    </citation>
    <scope>PHOSPHORYLATION [LARGE SCALE ANALYSIS] AT THR-722</scope>
    <scope>IDENTIFICATION BY MASS SPECTROMETRY [LARGE SCALE ANALYSIS]</scope>
</reference>
<reference key="24">
    <citation type="journal article" date="2009" name="Sci. Signal.">
        <title>Quantitative phosphoproteomic analysis of T cell receptor signaling reveals system-wide modulation of protein-protein interactions.</title>
        <authorList>
            <person name="Mayya V."/>
            <person name="Lundgren D.H."/>
            <person name="Hwang S.-I."/>
            <person name="Rezaul K."/>
            <person name="Wu L."/>
            <person name="Eng J.K."/>
            <person name="Rodionov V."/>
            <person name="Han D.K."/>
        </authorList>
    </citation>
    <scope>PHOSPHORYLATION [LARGE SCALE ANALYSIS] AT SER-672; THR-674; TYR-708; SER-711; THR-713; THR-722 AND THR-725</scope>
    <scope>IDENTIFICATION BY MASS SPECTROMETRY [LARGE SCALE ANALYSIS]</scope>
    <source>
        <tissue>Leukemic T-cell</tissue>
    </source>
</reference>
<reference key="25">
    <citation type="journal article" date="2010" name="Sci. Signal.">
        <title>Quantitative phosphoproteomics reveals widespread full phosphorylation site occupancy during mitosis.</title>
        <authorList>
            <person name="Olsen J.V."/>
            <person name="Vermeulen M."/>
            <person name="Santamaria A."/>
            <person name="Kumar C."/>
            <person name="Miller M.L."/>
            <person name="Jensen L.J."/>
            <person name="Gnad F."/>
            <person name="Cox J."/>
            <person name="Jensen T.S."/>
            <person name="Nigg E.A."/>
            <person name="Brunak S."/>
            <person name="Mann M."/>
        </authorList>
    </citation>
    <scope>PHOSPHORYLATION [LARGE SCALE ANALYSIS] AT SER-668; SER-672; SER-711 AND THR-722</scope>
    <scope>IDENTIFICATION BY MASS SPECTROMETRY [LARGE SCALE ANALYSIS]</scope>
    <source>
        <tissue>Cervix carcinoma</tissue>
    </source>
</reference>
<reference key="26">
    <citation type="journal article" date="2011" name="BMC Syst. Biol.">
        <title>Initial characterization of the human central proteome.</title>
        <authorList>
            <person name="Burkard T.R."/>
            <person name="Planyavsky M."/>
            <person name="Kaupe I."/>
            <person name="Breitwieser F.P."/>
            <person name="Buerckstuemmer T."/>
            <person name="Bennett K.L."/>
            <person name="Superti-Furga G."/>
            <person name="Colinge J."/>
        </authorList>
    </citation>
    <scope>IDENTIFICATION BY MASS SPECTROMETRY [LARGE SCALE ANALYSIS]</scope>
</reference>
<reference key="27">
    <citation type="journal article" date="2011" name="Sci. Signal.">
        <title>System-wide temporal characterization of the proteome and phosphoproteome of human embryonic stem cell differentiation.</title>
        <authorList>
            <person name="Rigbolt K.T."/>
            <person name="Prokhorova T.A."/>
            <person name="Akimov V."/>
            <person name="Henningsen J."/>
            <person name="Johansen P.T."/>
            <person name="Kratchmarova I."/>
            <person name="Kassem M."/>
            <person name="Mann M."/>
            <person name="Olsen J.V."/>
            <person name="Blagoev B."/>
        </authorList>
    </citation>
    <scope>PHOSPHORYLATION [LARGE SCALE ANALYSIS] AT SER-160; SER-672; THR-674 AND SER-711</scope>
    <scope>IDENTIFICATION BY MASS SPECTROMETRY [LARGE SCALE ANALYSIS]</scope>
</reference>
<reference key="28">
    <citation type="journal article" date="2012" name="Biochim. Biophys. Acta">
        <title>Characterization of O-GlcNAc cycling and proteomic identification of differentially O-GlcNAcylated proteins during G1/S transition.</title>
        <authorList>
            <person name="Drougat L."/>
            <person name="Olivier-Van Stichelen S."/>
            <person name="Mortuaire M."/>
            <person name="Foulquier F."/>
            <person name="Lacoste A.S."/>
            <person name="Michalski J.C."/>
            <person name="Lefebvre T."/>
            <person name="Vercoutter-Edouart A.S."/>
        </authorList>
    </citation>
    <scope>GLYCOSYLATION</scope>
</reference>
<reference key="29">
    <citation type="journal article" date="2012" name="Mol. Cell. Proteomics">
        <title>Comparative large-scale characterisation of plant vs. mammal proteins reveals similar and idiosyncratic N-alpha acetylation features.</title>
        <authorList>
            <person name="Bienvenut W.V."/>
            <person name="Sumpton D."/>
            <person name="Martinez A."/>
            <person name="Lilla S."/>
            <person name="Espagne C."/>
            <person name="Meinnel T."/>
            <person name="Giglione C."/>
        </authorList>
    </citation>
    <scope>ACETYLATION [LARGE SCALE ANALYSIS] AT ALA-2</scope>
    <scope>CLEAVAGE OF INITIATOR METHIONINE [LARGE SCALE ANALYSIS]</scope>
    <scope>IDENTIFICATION BY MASS SPECTROMETRY [LARGE SCALE ANALYSIS]</scope>
</reference>
<reference key="30">
    <citation type="journal article" date="2012" name="Proc. Natl. Acad. Sci. U.S.A.">
        <title>N-terminal acetylome analyses and functional insights of the N-terminal acetyltransferase NatB.</title>
        <authorList>
            <person name="Van Damme P."/>
            <person name="Lasa M."/>
            <person name="Polevoda B."/>
            <person name="Gazquez C."/>
            <person name="Elosegui-Artola A."/>
            <person name="Kim D.S."/>
            <person name="De Juan-Pardo E."/>
            <person name="Demeyer K."/>
            <person name="Hole K."/>
            <person name="Larrea E."/>
            <person name="Timmerman E."/>
            <person name="Prieto J."/>
            <person name="Arnesen T."/>
            <person name="Sherman F."/>
            <person name="Gevaert K."/>
            <person name="Aldabe R."/>
        </authorList>
    </citation>
    <scope>ACETYLATION [LARGE SCALE ANALYSIS] AT ALA-2</scope>
    <scope>CLEAVAGE OF INITIATOR METHIONINE [LARGE SCALE ANALYSIS]</scope>
    <scope>IDENTIFICATION BY MASS SPECTROMETRY [LARGE SCALE ANALYSIS]</scope>
</reference>
<reference key="31">
    <citation type="journal article" date="2013" name="FEBS Lett.">
        <title>A role for the Ankyrin repeat containing protein Ankrd17 in Nod1- and Nod2-mediated inflammatory responses.</title>
        <authorList>
            <person name="Menning M."/>
            <person name="Kufer T.A."/>
        </authorList>
    </citation>
    <scope>INTERACTION WITH ANKRD17</scope>
</reference>
<reference key="32">
    <citation type="journal article" date="2013" name="J. Proteome Res.">
        <title>Toward a comprehensive characterization of a human cancer cell phosphoproteome.</title>
        <authorList>
            <person name="Zhou H."/>
            <person name="Di Palma S."/>
            <person name="Preisinger C."/>
            <person name="Peng M."/>
            <person name="Polat A.N."/>
            <person name="Heck A.J."/>
            <person name="Mohammed S."/>
        </authorList>
    </citation>
    <scope>PHOSPHORYLATION [LARGE SCALE ANALYSIS] AT SER-275; SER-611; SER-672; THR-674 AND THR-722</scope>
    <scope>IDENTIFICATION BY MASS SPECTROMETRY [LARGE SCALE ANALYSIS]</scope>
    <source>
        <tissue>Cervix carcinoma</tissue>
        <tissue>Erythroleukemia</tissue>
    </source>
</reference>
<reference key="33">
    <citation type="journal article" date="2022" name="Nature">
        <title>Fast and efficient DNA replication with purified human proteins.</title>
        <authorList>
            <person name="Baris Y."/>
            <person name="Taylor M.R.G."/>
            <person name="Aria V."/>
            <person name="Yeeles J.T.P."/>
        </authorList>
    </citation>
    <scope>FUNCTION</scope>
    <scope>SUBCELLULAR LOCATION</scope>
</reference>
<reference evidence="23 24" key="34">
    <citation type="journal article" date="2020" name="Nucleic Acids Res.">
        <title>CryoEM structures of human CMG-ATPgammaS-DNA and CMG-AND-1 complexes.</title>
        <authorList>
            <person name="Rzechorzek N.J."/>
            <person name="Hardwick S.W."/>
            <person name="Jatikusumo V.A."/>
            <person name="Chirgadze D.Y."/>
            <person name="Pellegrini L."/>
        </authorList>
    </citation>
    <scope>STRUCTURE BY ELECTRON MICROSCOPY (3.29 ANGSTROMS) IN COMPLEXES WITH ADP; ATP ANALOG AND WDHD1 IN CMG COMPLEX</scope>
    <scope>SUBUNIT</scope>
    <scope>FUNCTION</scope>
</reference>
<reference evidence="26" key="35">
    <citation type="journal article" date="2021" name="Nature">
        <title>A conserved mechanism for regulating replisome disassembly in eukaryotes.</title>
        <authorList>
            <person name="Jenkyn-Bedford M."/>
            <person name="Jones M.L."/>
            <person name="Baris Y."/>
            <person name="Labib K.P.M."/>
            <person name="Cannone G."/>
            <person name="Yeeles J.T.P."/>
            <person name="Deegan T.D."/>
        </authorList>
    </citation>
    <scope>STRUCTURE BY ELECTRON MICROSCOPY (2.80 ANGSTROMS) IN REPLISOME</scope>
    <scope>SUBUNIT</scope>
    <scope>FUNCTION</scope>
</reference>
<reference evidence="25" key="36">
    <citation type="journal article" date="2021" name="EMBO J.">
        <title>Structure of a human replisome shows the organisation and interactions of a DNA replication machine.</title>
        <authorList>
            <person name="Jones M.L."/>
            <person name="Baris Y."/>
            <person name="Taylor M.R.G."/>
            <person name="Yeeles J.T.P."/>
        </authorList>
    </citation>
    <scope>STRUCTURE BY ELECTRON MICROSCOPY (3.20 ANGSTROMS) IN REPLISOME</scope>
    <scope>SUBUNIT</scope>
    <scope>FUNCTION</scope>
</reference>
<feature type="initiator methionine" description="Removed" evidence="17 33 37 38">
    <location>
        <position position="1"/>
    </location>
</feature>
<feature type="chain" id="PRO_0000194093" description="DNA replication licensing factor MCM3">
    <location>
        <begin position="2"/>
        <end position="808"/>
    </location>
</feature>
<feature type="domain" description="MCM">
    <location>
        <begin position="295"/>
        <end position="502"/>
    </location>
</feature>
<feature type="region of interest" description="Disordered" evidence="3">
    <location>
        <begin position="662"/>
        <end position="739"/>
    </location>
</feature>
<feature type="short sequence motif" description="Arginine finger">
    <location>
        <begin position="477"/>
        <end position="480"/>
    </location>
</feature>
<feature type="compositionally biased region" description="Acidic residues" evidence="3">
    <location>
        <begin position="670"/>
        <end position="681"/>
    </location>
</feature>
<feature type="compositionally biased region" description="Acidic residues" evidence="3">
    <location>
        <begin position="704"/>
        <end position="717"/>
    </location>
</feature>
<feature type="compositionally biased region" description="Basic and acidic residues" evidence="3">
    <location>
        <begin position="727"/>
        <end position="739"/>
    </location>
</feature>
<feature type="binding site" evidence="20 23">
    <location>
        <position position="353"/>
    </location>
    <ligand>
        <name>ADP</name>
        <dbReference type="ChEBI" id="CHEBI:456216"/>
        <note>ligand shared with MCM5</note>
    </ligand>
</feature>
<feature type="binding site" evidence="20 23">
    <location>
        <position position="393"/>
    </location>
    <ligand>
        <name>ADP</name>
        <dbReference type="ChEBI" id="CHEBI:456216"/>
        <note>ligand shared with MCM5</note>
    </ligand>
</feature>
<feature type="binding site" evidence="20 23">
    <location>
        <position position="394"/>
    </location>
    <ligand>
        <name>ADP</name>
        <dbReference type="ChEBI" id="CHEBI:456216"/>
        <note>ligand shared with MCM5</note>
    </ligand>
</feature>
<feature type="binding site" evidence="20 23">
    <location>
        <position position="395"/>
    </location>
    <ligand>
        <name>ADP</name>
        <dbReference type="ChEBI" id="CHEBI:456216"/>
        <note>ligand shared with MCM5</note>
    </ligand>
</feature>
<feature type="binding site" evidence="20 23">
    <location>
        <position position="397"/>
    </location>
    <ligand>
        <name>ADP</name>
        <dbReference type="ChEBI" id="CHEBI:456216"/>
        <note>ligand shared with MCM5</note>
    </ligand>
</feature>
<feature type="binding site" evidence="20 23">
    <location>
        <position position="523"/>
    </location>
    <ligand>
        <name>ATP</name>
        <dbReference type="ChEBI" id="CHEBI:30616"/>
        <note>ligand shared with MCM7</note>
    </ligand>
</feature>
<feature type="binding site" evidence="20 23">
    <location>
        <position position="664"/>
    </location>
    <ligand>
        <name>ATP</name>
        <dbReference type="ChEBI" id="CHEBI:30616"/>
        <note>ligand shared with MCM7</note>
    </ligand>
</feature>
<feature type="modified residue" description="N-acetylalanine" evidence="17 33 37 38">
    <location>
        <position position="2"/>
    </location>
</feature>
<feature type="modified residue" description="Phosphoserine" evidence="30 36">
    <location>
        <position position="160"/>
    </location>
</feature>
<feature type="modified residue" description="Phosphoserine" evidence="39">
    <location>
        <position position="275"/>
    </location>
</feature>
<feature type="modified residue" description="N6-acetyllysine" evidence="1">
    <location>
        <position position="293"/>
    </location>
</feature>
<feature type="modified residue" description="Phosphoserine; by ATM" evidence="6">
    <location>
        <position position="535"/>
    </location>
</feature>
<feature type="modified residue" description="N6-acetyllysine" evidence="1">
    <location>
        <position position="547"/>
    </location>
</feature>
<feature type="modified residue" description="Phosphoserine" evidence="39">
    <location>
        <position position="611"/>
    </location>
</feature>
<feature type="modified residue" description="Phosphoserine" evidence="30 35">
    <location>
        <position position="668"/>
    </location>
</feature>
<feature type="modified residue" description="Phosphoserine" evidence="27 30 34 35 36 39">
    <location>
        <position position="672"/>
    </location>
</feature>
<feature type="modified residue" description="Phosphothreonine" evidence="27 30 34 36 39">
    <location>
        <position position="674"/>
    </location>
</feature>
<feature type="modified residue" description="Phosphoserine" evidence="30">
    <location>
        <position position="681"/>
    </location>
</feature>
<feature type="modified residue" description="Phosphotyrosine" evidence="34">
    <location>
        <position position="708"/>
    </location>
</feature>
<feature type="modified residue" description="Phosphoserine" evidence="30 34 35 36">
    <location>
        <position position="711"/>
    </location>
</feature>
<feature type="modified residue" description="Phosphothreonine" evidence="30 34">
    <location>
        <position position="713"/>
    </location>
</feature>
<feature type="modified residue" description="Phosphothreonine" evidence="28 29 30 31 32 34 35 39">
    <location>
        <position position="722"/>
    </location>
</feature>
<feature type="modified residue" description="Phosphothreonine" evidence="34">
    <location>
        <position position="725"/>
    </location>
</feature>
<feature type="modified residue" description="Phosphoserine" evidence="1">
    <location>
        <position position="728"/>
    </location>
</feature>
<feature type="modified residue" description="Phosphoserine" evidence="1">
    <location>
        <position position="734"/>
    </location>
</feature>
<feature type="splice variant" id="VSP_057050" description="In isoform 2." evidence="18">
    <original>M</original>
    <variation>MLPRSPPLPRGNLWWREEFGSFRAGVESSWEPPRDFGGGSSLAAGM</variation>
    <location>
        <position position="1"/>
    </location>
</feature>
<feature type="sequence variant" id="VAR_014810" description="In dbSNP:rs2307332.">
    <original>S</original>
    <variation>G</variation>
    <location>
        <position position="105"/>
    </location>
</feature>
<feature type="sequence variant" id="VAR_014811" description="In dbSNP:rs2307329." evidence="16">
    <original>D</original>
    <variation>V</variation>
    <location>
        <position position="280"/>
    </location>
</feature>
<feature type="sequence variant" id="VAR_014812" description="In dbSNP:rs2307328." evidence="16">
    <original>F</original>
    <variation>L</variation>
    <location>
        <position position="287"/>
    </location>
</feature>
<feature type="sequence variant" id="VAR_020516" description="In dbSNP:rs17240063." evidence="16">
    <original>I</original>
    <variation>L</variation>
    <location>
        <position position="590"/>
    </location>
</feature>
<feature type="sequence variant" id="VAR_020517" description="In dbSNP:rs2230239." evidence="16">
    <original>R</original>
    <variation>W</variation>
    <location>
        <position position="774"/>
    </location>
</feature>
<feature type="sequence variant" id="VAR_020427" description="In dbSNP:rs2230240." evidence="16">
    <original>E</original>
    <variation>K</variation>
    <location>
        <position position="777"/>
    </location>
</feature>
<feature type="mutagenesis site" description="50% reduction in phosphorylation by ATM or ATR." evidence="6">
    <original>S</original>
    <variation>A</variation>
    <location>
        <position position="535"/>
    </location>
</feature>
<feature type="sequence conflict" description="In Ref. 3; BAA07267." evidence="19" ref="3">
    <original>KP</original>
    <variation>NA</variation>
    <location>
        <begin position="230"/>
        <end position="231"/>
    </location>
</feature>
<feature type="helix" evidence="40">
    <location>
        <begin position="10"/>
        <end position="22"/>
    </location>
</feature>
<feature type="strand" evidence="40">
    <location>
        <begin position="26"/>
        <end position="28"/>
    </location>
</feature>
<feature type="helix" evidence="40">
    <location>
        <begin position="32"/>
        <end position="42"/>
    </location>
</feature>
<feature type="strand" evidence="40">
    <location>
        <begin position="46"/>
        <end position="50"/>
    </location>
</feature>
<feature type="helix" evidence="40">
    <location>
        <begin position="51"/>
        <end position="57"/>
    </location>
</feature>
<feature type="helix" evidence="40">
    <location>
        <begin position="59"/>
        <end position="67"/>
    </location>
</feature>
<feature type="helix" evidence="40">
    <location>
        <begin position="70"/>
        <end position="87"/>
    </location>
</feature>
<feature type="helix" evidence="40">
    <location>
        <begin position="91"/>
        <end position="93"/>
    </location>
</feature>
<feature type="strand" evidence="40">
    <location>
        <begin position="99"/>
        <end position="104"/>
    </location>
</feature>
<feature type="helix" evidence="40">
    <location>
        <begin position="107"/>
        <end position="109"/>
    </location>
</feature>
<feature type="turn" evidence="40">
    <location>
        <begin position="113"/>
        <end position="115"/>
    </location>
</feature>
<feature type="helix" evidence="40">
    <location>
        <begin position="118"/>
        <end position="120"/>
    </location>
</feature>
<feature type="strand" evidence="40">
    <location>
        <begin position="123"/>
        <end position="134"/>
    </location>
</feature>
<feature type="strand" evidence="40">
    <location>
        <begin position="138"/>
        <end position="148"/>
    </location>
</feature>
<feature type="turn" evidence="40">
    <location>
        <begin position="149"/>
        <end position="152"/>
    </location>
</feature>
<feature type="strand" evidence="40">
    <location>
        <begin position="153"/>
        <end position="158"/>
    </location>
</feature>
<feature type="strand" evidence="40">
    <location>
        <begin position="161"/>
        <end position="166"/>
    </location>
</feature>
<feature type="turn" evidence="40">
    <location>
        <begin position="188"/>
        <end position="190"/>
    </location>
</feature>
<feature type="strand" evidence="40">
    <location>
        <begin position="191"/>
        <end position="202"/>
    </location>
</feature>
<feature type="turn" evidence="40">
    <location>
        <begin position="205"/>
        <end position="207"/>
    </location>
</feature>
<feature type="strand" evidence="40">
    <location>
        <begin position="216"/>
        <end position="221"/>
    </location>
</feature>
<feature type="turn" evidence="40">
    <location>
        <begin position="224"/>
        <end position="227"/>
    </location>
</feature>
<feature type="strand" evidence="40">
    <location>
        <begin position="234"/>
        <end position="244"/>
    </location>
</feature>
<feature type="strand" evidence="40">
    <location>
        <begin position="250"/>
        <end position="252"/>
    </location>
</feature>
<feature type="strand" evidence="40">
    <location>
        <begin position="257"/>
        <end position="267"/>
    </location>
</feature>
<feature type="helix" evidence="40">
    <location>
        <begin position="282"/>
        <end position="291"/>
    </location>
</feature>
<feature type="helix" evidence="40">
    <location>
        <begin position="293"/>
        <end position="301"/>
    </location>
</feature>
<feature type="helix" evidence="40">
    <location>
        <begin position="311"/>
        <end position="322"/>
    </location>
</feature>
<feature type="strand" evidence="40">
    <location>
        <begin position="340"/>
        <end position="345"/>
    </location>
</feature>
<feature type="strand" evidence="40">
    <location>
        <begin position="347"/>
        <end position="349"/>
    </location>
</feature>
<feature type="helix" evidence="40">
    <location>
        <begin position="351"/>
        <end position="361"/>
    </location>
</feature>
<feature type="strand" evidence="40">
    <location>
        <begin position="362"/>
        <end position="367"/>
    </location>
</feature>
<feature type="turn" evidence="40">
    <location>
        <begin position="370"/>
        <end position="372"/>
    </location>
</feature>
<feature type="helix" evidence="40">
    <location>
        <begin position="375"/>
        <end position="378"/>
    </location>
</feature>
<feature type="strand" evidence="40">
    <location>
        <begin position="379"/>
        <end position="384"/>
    </location>
</feature>
<feature type="turn" evidence="40">
    <location>
        <begin position="386"/>
        <end position="388"/>
    </location>
</feature>
<feature type="strand" evidence="40">
    <location>
        <begin position="391"/>
        <end position="395"/>
    </location>
</feature>
<feature type="helix" evidence="40">
    <location>
        <begin position="397"/>
        <end position="400"/>
    </location>
</feature>
<feature type="turn" evidence="40">
    <location>
        <begin position="401"/>
        <end position="403"/>
    </location>
</feature>
<feature type="strand" evidence="40">
    <location>
        <begin position="404"/>
        <end position="410"/>
    </location>
</feature>
<feature type="helix" evidence="40">
    <location>
        <begin position="411"/>
        <end position="413"/>
    </location>
</feature>
<feature type="helix" evidence="40">
    <location>
        <begin position="416"/>
        <end position="427"/>
    </location>
</feature>
<feature type="strand" evidence="40">
    <location>
        <begin position="429"/>
        <end position="435"/>
    </location>
</feature>
<feature type="strand" evidence="40">
    <location>
        <begin position="438"/>
        <end position="443"/>
    </location>
</feature>
<feature type="strand" evidence="40">
    <location>
        <begin position="446"/>
        <end position="452"/>
    </location>
</feature>
<feature type="strand" evidence="40">
    <location>
        <begin position="461"/>
        <end position="463"/>
    </location>
</feature>
<feature type="helix" evidence="40">
    <location>
        <begin position="465"/>
        <end position="469"/>
    </location>
</feature>
<feature type="helix" evidence="40">
    <location>
        <begin position="473"/>
        <end position="478"/>
    </location>
</feature>
<feature type="strand" evidence="40">
    <location>
        <begin position="479"/>
        <end position="485"/>
    </location>
</feature>
<feature type="helix" evidence="40">
    <location>
        <begin position="491"/>
        <end position="506"/>
    </location>
</feature>
<feature type="turn" evidence="40">
    <location>
        <begin position="550"/>
        <end position="553"/>
    </location>
</feature>
<feature type="helix" evidence="40">
    <location>
        <begin position="556"/>
        <end position="559"/>
    </location>
</feature>
<feature type="helix" evidence="40">
    <location>
        <begin position="565"/>
        <end position="577"/>
    </location>
</feature>
<feature type="helix" evidence="40">
    <location>
        <begin position="584"/>
        <end position="600"/>
    </location>
</feature>
<feature type="turn" evidence="40">
    <location>
        <begin position="601"/>
        <end position="603"/>
    </location>
</feature>
<feature type="strand" evidence="40">
    <location>
        <begin position="606"/>
        <end position="611"/>
    </location>
</feature>
<feature type="helix" evidence="40">
    <location>
        <begin position="616"/>
        <end position="631"/>
    </location>
</feature>
<feature type="strand" evidence="40">
    <location>
        <begin position="635"/>
        <end position="637"/>
    </location>
</feature>
<feature type="helix" evidence="40">
    <location>
        <begin position="639"/>
        <end position="653"/>
    </location>
</feature>
<keyword id="KW-0002">3D-structure</keyword>
<keyword id="KW-0007">Acetylation</keyword>
<keyword id="KW-0025">Alternative splicing</keyword>
<keyword id="KW-0067">ATP-binding</keyword>
<keyword id="KW-0131">Cell cycle</keyword>
<keyword id="KW-0158">Chromosome</keyword>
<keyword id="KW-0903">Direct protein sequencing</keyword>
<keyword id="KW-0235">DNA replication</keyword>
<keyword id="KW-0238">DNA-binding</keyword>
<keyword id="KW-0325">Glycoprotein</keyword>
<keyword id="KW-0347">Helicase</keyword>
<keyword id="KW-0378">Hydrolase</keyword>
<keyword id="KW-0547">Nucleotide-binding</keyword>
<keyword id="KW-0539">Nucleus</keyword>
<keyword id="KW-0597">Phosphoprotein</keyword>
<keyword id="KW-1267">Proteomics identification</keyword>
<keyword id="KW-1185">Reference proteome</keyword>
<sequence>MAGTVVLDDVELREAQRDYLDFLDDEEDQGIYQSKVRELISDNQYRLIVNVNDLRRKNEKRANRLLNNAFEELVAFQRALKDFVASIDATYAKQYEEFYVGLEGSFGSKHVSPRTLTSCFLSCVVCVEGIVTKCSLVRPKVVRSVHYCPATKKTIERRYSDLTTLVAFPSSSVYPTKDEENNPLETEYGLSVYKDHQTITIQEMPEKAPAGQLPRSVDVILDDDLVDKAKPGDRVQVVGTYRCLPGKKGGYTSGTFRTVLIACNVKQMSKDAQPSFSAEDIAKIKKFSKTRSKDIFDQLAKSLAPSIHGHDYVKKAILCLLLGGVERDLENGSHIRGDINILLIGDPSVAKSQLLRYVLCTAPRAIPTTGRGSSGVGLTAAVTTDQETGERRLEAGAMVLADRGVVCIDEFDKMSDMDRTAIHEVMEQGRVTIAKAGIHARLNARCSVLAAANPVYGRYDQYKTPMENIGLQDSLLSRFDLLFIMLDQMDPEQDREISDHVLRMHRYRAPGEQDGDAMPLGSAVDILATDDPNFSQEDQQDTQIYEKHDNLLHGTKKKKEKMVSAAFMKKYIHVAKIIKPVLTQESATYIAEEYSRLRSQDSMSSDTARTSPVTARTLETLIRLATAHAKARMSKTVDLQDAEEAVELVQYAYFKKVLEKEKKRKKRSEDESETEDEEEKSQEDQEQKRKRRKTRQPDAKDGDSYDPYDFSDTEEEMPQVHTPKTADSQETKESQKVELSESRLKAFKVALLDVFREAHAQSIGMNRLTESINRDSEEPFSSVEIQAALSKMQDDNQVMVSEGIIFLI</sequence>
<comment type="function">
    <text evidence="11 12 13 14 21">Acts as a component of the MCM2-7 complex (MCM complex) which is the replicative helicase essential for 'once per cell cycle' DNA replication initiation and elongation in eukaryotic cells. Core component of CDC45-MCM-GINS (CMG) helicase, the molecular machine that unwinds template DNA during replication, and around which the replisome is built (PubMed:32453425, PubMed:34694004, PubMed:34700328, PubMed:35585232). The active ATPase sites in the MCM2-7 ring are formed through the interaction surfaces of two neighboring subunits such that a critical structure of a conserved arginine finger motif is provided in trans relative to the ATP-binding site of the Walker A box of the adjacent subunit. The six ATPase active sites, however, are likely to contribute differentially to the complex helicase activity (PubMed:32453425). Required for the entry in S phase and for cell division (Probable).</text>
</comment>
<comment type="catalytic activity">
    <reaction evidence="11">
        <text>ATP + H2O = ADP + phosphate + H(+)</text>
        <dbReference type="Rhea" id="RHEA:13065"/>
        <dbReference type="ChEBI" id="CHEBI:15377"/>
        <dbReference type="ChEBI" id="CHEBI:15378"/>
        <dbReference type="ChEBI" id="CHEBI:30616"/>
        <dbReference type="ChEBI" id="CHEBI:43474"/>
        <dbReference type="ChEBI" id="CHEBI:456216"/>
        <dbReference type="EC" id="3.6.4.12"/>
    </reaction>
    <physiologicalReaction direction="left-to-right" evidence="11">
        <dbReference type="Rhea" id="RHEA:13066"/>
    </physiologicalReaction>
</comment>
<comment type="subunit">
    <text evidence="1 2 4 5 7 8 10 11 12 13 15">Component of the MCM2-7 complex (PubMed:16899510, PubMed:17296731). The complex forms a toroidal hexameric ring with the proposed subunit order MCM2-MCM6-MCM4-MCM7-MCM3-MCM5 (PubMed:16899510, PubMed:17296731, PubMed:32453425, PubMed:34694004, PubMed:34700328). Component of the CMG helicase complex, a hexameric ring of related MCM2-7 subunits stabilized by CDC45 and the tetrameric GINS complex (PubMed:32453425, PubMed:34694004, PubMed:34700328). Associated with the replication-specific DNA polymerase alpha (By similarity). Interacts with MCMBP (PubMed:17296731). Interacts with ANKRD17 (PubMed:23711367). Interacts with MCM3AP isoform MCM3AP; this interaction leads to MCM3 acetylation (PubMed:11258703, PubMed:12226073, PubMed:9712829).</text>
</comment>
<comment type="interaction">
    <interactant intactId="EBI-355153">
        <id>P25205</id>
    </interactant>
    <interactant intactId="EBI-302023">
        <id>P62805</id>
        <label>H4C9</label>
    </interactant>
    <organismsDiffer>false</organismsDiffer>
    <experiments>2</experiments>
</comment>
<comment type="interaction">
    <interactant intactId="EBI-355153">
        <id>P25205</id>
    </interactant>
    <interactant intactId="EBI-374819">
        <id>P49736</id>
        <label>MCM2</label>
    </interactant>
    <organismsDiffer>false</organismsDiffer>
    <experiments>9</experiments>
</comment>
<comment type="interaction">
    <interactant intactId="EBI-355153">
        <id>P25205</id>
    </interactant>
    <interactant intactId="EBI-359410">
        <id>P33992</id>
        <label>MCM5</label>
    </interactant>
    <organismsDiffer>false</organismsDiffer>
    <experiments>8</experiments>
</comment>
<comment type="interaction">
    <interactant intactId="EBI-355153">
        <id>P25205</id>
    </interactant>
    <interactant intactId="EBI-374900">
        <id>Q14566</id>
        <label>MCM6</label>
    </interactant>
    <organismsDiffer>false</organismsDiffer>
    <experiments>5</experiments>
</comment>
<comment type="interaction">
    <interactant intactId="EBI-355153">
        <id>P25205</id>
    </interactant>
    <interactant intactId="EBI-749378">
        <id>Q9BTE3</id>
        <label>MCMBP</label>
    </interactant>
    <organismsDiffer>false</organismsDiffer>
    <experiments>13</experiments>
</comment>
<comment type="interaction">
    <interactant intactId="EBI-355153">
        <id>P25205</id>
    </interactant>
    <interactant intactId="EBI-374957">
        <id>Q13416</id>
        <label>ORC2</label>
    </interactant>
    <organismsDiffer>false</organismsDiffer>
    <experiments>2</experiments>
</comment>
<comment type="subcellular location">
    <subcellularLocation>
        <location evidence="21">Nucleus</location>
    </subcellularLocation>
    <subcellularLocation>
        <location evidence="21">Chromosome</location>
    </subcellularLocation>
    <text evidence="21">Associated with chromatin before the formation of nuclei and detaches from it as DNA replication progresses.</text>
</comment>
<comment type="alternative products">
    <event type="alternative splicing"/>
    <isoform>
        <id>P25205-1</id>
        <name>1</name>
        <sequence type="displayed"/>
    </isoform>
    <isoform>
        <id>P25205-2</id>
        <name>2</name>
        <sequence type="described" ref="VSP_057050"/>
    </isoform>
</comment>
<comment type="PTM">
    <text evidence="4 5">Acetylated by MCM3AP.</text>
</comment>
<comment type="PTM">
    <text evidence="9">O-glycosylated (O-GlcNAcylated), in a cell cycle-dependent manner.</text>
</comment>
<comment type="miscellaneous">
    <text>Early fractionation of eukaryotic MCM proteins yielded a variety of dimeric, trimeric and tetrameric complexes with unclear biological significance. The MCM2-7 hexamer is the proposed physiological active complex.</text>
</comment>
<comment type="similarity">
    <text evidence="19">Belongs to the MCM family.</text>
</comment>
<organism>
    <name type="scientific">Homo sapiens</name>
    <name type="common">Human</name>
    <dbReference type="NCBI Taxonomy" id="9606"/>
    <lineage>
        <taxon>Eukaryota</taxon>
        <taxon>Metazoa</taxon>
        <taxon>Chordata</taxon>
        <taxon>Craniata</taxon>
        <taxon>Vertebrata</taxon>
        <taxon>Euteleostomi</taxon>
        <taxon>Mammalia</taxon>
        <taxon>Eutheria</taxon>
        <taxon>Euarchontoglires</taxon>
        <taxon>Primates</taxon>
        <taxon>Haplorrhini</taxon>
        <taxon>Catarrhini</taxon>
        <taxon>Hominidae</taxon>
        <taxon>Homo</taxon>
    </lineage>
</organism>
<accession>P25205</accession>
<accession>B4DWW4</accession>
<accession>Q92660</accession>
<accession>Q9BTR3</accession>
<accession>Q9NUE7</accession>
<protein>
    <recommendedName>
        <fullName evidence="19">DNA replication licensing factor MCM3</fullName>
        <ecNumber evidence="11">3.6.4.12</ecNumber>
    </recommendedName>
    <alternativeName>
        <fullName>DNA polymerase alpha holoenzyme-associated protein P1</fullName>
    </alternativeName>
    <alternativeName>
        <fullName>P1-MCM3</fullName>
    </alternativeName>
    <alternativeName>
        <fullName>RLF subunit beta</fullName>
    </alternativeName>
    <alternativeName>
        <fullName>p102</fullName>
    </alternativeName>
</protein>
<name>MCM3_HUMAN</name>